<comment type="function">
    <text evidence="1">DNA-binding protein which binds to the hairpin form of the viral telomeric sequence. Required for the production of mature virions (MV).</text>
</comment>
<comment type="subcellular location">
    <subcellularLocation>
        <location evidence="1">Virion</location>
    </subcellularLocation>
    <text evidence="1">Present in the virus core.</text>
</comment>
<comment type="induction">
    <text>Expressed in the late phase of the viral replicative cycle.</text>
</comment>
<comment type="miscellaneous">
    <text evidence="1">Each virion contains approximately 670 molecules of OPG077.</text>
</comment>
<comment type="similarity">
    <text evidence="2">Belongs to the orthopoxvirus OPG077 family.</text>
</comment>
<reference key="1">
    <citation type="journal article" date="2001" name="FEBS Lett.">
        <title>Human monkeypox and smallpox viruses: genomic comparison.</title>
        <authorList>
            <person name="Shchelkunov S.N."/>
            <person name="Totmenin A.V."/>
            <person name="Babkin I.V."/>
            <person name="Safronov P.F."/>
            <person name="Ryazankina O.I."/>
            <person name="Petrov N.A."/>
            <person name="Gutorov V.V."/>
            <person name="Uvarova E.A."/>
            <person name="Mikheev M.V."/>
            <person name="Sisler J.R."/>
            <person name="Esposito J.J."/>
            <person name="Jahrling P.B."/>
            <person name="Moss B."/>
            <person name="Sandakhchiev L.S."/>
        </authorList>
    </citation>
    <scope>NUCLEOTIDE SEQUENCE [LARGE SCALE GENOMIC DNA]</scope>
    <source>
        <strain>Zaire-96-I-16</strain>
    </source>
</reference>
<name>PG077_MONPZ</name>
<organismHost>
    <name type="scientific">Cynomys gunnisoni</name>
    <name type="common">Gunnison's prairie dog</name>
    <name type="synonym">Spermophilus gunnisoni</name>
    <dbReference type="NCBI Taxonomy" id="45479"/>
</organismHost>
<organismHost>
    <name type="scientific">Cynomys leucurus</name>
    <name type="common">White-tailed prairie dog</name>
    <dbReference type="NCBI Taxonomy" id="99825"/>
</organismHost>
<organismHost>
    <name type="scientific">Cynomys ludovicianus</name>
    <name type="common">Black-tailed prairie dog</name>
    <dbReference type="NCBI Taxonomy" id="45480"/>
</organismHost>
<organismHost>
    <name type="scientific">Cynomys mexicanus</name>
    <name type="common">Mexican prairie dog</name>
    <dbReference type="NCBI Taxonomy" id="99826"/>
</organismHost>
<organismHost>
    <name type="scientific">Cynomys parvidens</name>
    <name type="common">Utah prairie dog</name>
    <dbReference type="NCBI Taxonomy" id="99827"/>
</organismHost>
<organismHost>
    <name type="scientific">Gliridae</name>
    <name type="common">dormice</name>
    <dbReference type="NCBI Taxonomy" id="30650"/>
</organismHost>
<organismHost>
    <name type="scientific">Heliosciurus ruwenzorii</name>
    <name type="common">Ruwenzori sun squirrel</name>
    <dbReference type="NCBI Taxonomy" id="226685"/>
</organismHost>
<organismHost>
    <name type="scientific">Homo sapiens</name>
    <name type="common">Human</name>
    <dbReference type="NCBI Taxonomy" id="9606"/>
</organismHost>
<organismHost>
    <name type="scientific">Mus musculus</name>
    <name type="common">Mouse</name>
    <dbReference type="NCBI Taxonomy" id="10090"/>
</organismHost>
<protein>
    <recommendedName>
        <fullName>Telomere-binding protein OPG077</fullName>
    </recommendedName>
    <alternativeName>
        <fullName>36 kDa late protein I1</fullName>
    </alternativeName>
    <alternativeName>
        <fullName>Telomere-binding protein I1</fullName>
    </alternativeName>
</protein>
<dbReference type="EMBL" id="AF380138">
    <property type="protein sequence ID" value="AAL40520.1"/>
    <property type="molecule type" value="Genomic_DNA"/>
</dbReference>
<dbReference type="RefSeq" id="NP_536489.1">
    <property type="nucleotide sequence ID" value="NC_003310.1"/>
</dbReference>
<dbReference type="SMR" id="Q8V518"/>
<dbReference type="GeneID" id="929042"/>
<dbReference type="KEGG" id="vg:929042"/>
<dbReference type="Proteomes" id="UP000101269">
    <property type="component" value="Genome"/>
</dbReference>
<dbReference type="GO" id="GO:0044423">
    <property type="term" value="C:virion component"/>
    <property type="evidence" value="ECO:0007669"/>
    <property type="project" value="UniProtKB-KW"/>
</dbReference>
<dbReference type="GO" id="GO:0003677">
    <property type="term" value="F:DNA binding"/>
    <property type="evidence" value="ECO:0007669"/>
    <property type="project" value="UniProtKB-KW"/>
</dbReference>
<dbReference type="InterPro" id="IPR004969">
    <property type="entry name" value="Poxvirus_I1"/>
</dbReference>
<dbReference type="Pfam" id="PF03289">
    <property type="entry name" value="Pox_I1"/>
    <property type="match status" value="1"/>
</dbReference>
<dbReference type="PIRSF" id="PIRSF015625">
    <property type="entry name" value="VAC_I1L"/>
    <property type="match status" value="1"/>
</dbReference>
<accession>Q8V518</accession>
<sequence length="312" mass="35870">MAEFEDQLVFNSISARALKAYFTAKINEMVDELVTRKCPQKKKSQAKKPEVRIPVDLVKSSFVKKFGLCNYGGILISLINSLVENNFFTKNGKLDDTGKKELVLTDVEKRILNTIDKSSPLYIDISDVKVLAARLKRSATQFNFNGHTYHLENDKIEDLINQLVKDESIQLDEKSSIKDSMYVIPDELIDVLKTRLFRSPQVKDNIISRTRLYDYFTRVTKRDESSIYVILKDPRIASILSLETVKMGAFMYTKHSMLTNAISSRVDRYSKKFQESFYEDIAEFVKENERVNVSRVVECLTVPNITISSNTE</sequence>
<gene>
    <name type="primary">OPG077</name>
    <name type="ORF">I1L</name>
</gene>
<keyword id="KW-0238">DNA-binding</keyword>
<keyword id="KW-0946">Virion</keyword>
<evidence type="ECO:0000250" key="1">
    <source>
        <dbReference type="UniProtKB" id="P16714"/>
    </source>
</evidence>
<evidence type="ECO:0000305" key="2"/>
<feature type="chain" id="PRO_0000099563" description="Telomere-binding protein OPG077">
    <location>
        <begin position="1"/>
        <end position="312"/>
    </location>
</feature>
<proteinExistence type="evidence at transcript level"/>
<organism>
    <name type="scientific">Monkeypox virus (strain Zaire-96-I-16)</name>
    <name type="common">MPX</name>
    <dbReference type="NCBI Taxonomy" id="619591"/>
    <lineage>
        <taxon>Viruses</taxon>
        <taxon>Varidnaviria</taxon>
        <taxon>Bamfordvirae</taxon>
        <taxon>Nucleocytoviricota</taxon>
        <taxon>Pokkesviricetes</taxon>
        <taxon>Chitovirales</taxon>
        <taxon>Poxviridae</taxon>
        <taxon>Chordopoxvirinae</taxon>
        <taxon>Orthopoxvirus</taxon>
        <taxon>Monkeypox virus</taxon>
    </lineage>
</organism>